<name>AROC_STAA9</name>
<dbReference type="EC" id="4.2.3.5" evidence="1"/>
<dbReference type="EMBL" id="CP000703">
    <property type="protein sequence ID" value="ABQ49319.1"/>
    <property type="molecule type" value="Genomic_DNA"/>
</dbReference>
<dbReference type="RefSeq" id="WP_001269921.1">
    <property type="nucleotide sequence ID" value="NC_009487.1"/>
</dbReference>
<dbReference type="SMR" id="A5ISZ6"/>
<dbReference type="KEGG" id="saj:SaurJH9_1525"/>
<dbReference type="HOGENOM" id="CLU_034547_2_0_9"/>
<dbReference type="UniPathway" id="UPA00053">
    <property type="reaction ID" value="UER00090"/>
</dbReference>
<dbReference type="GO" id="GO:0005829">
    <property type="term" value="C:cytosol"/>
    <property type="evidence" value="ECO:0007669"/>
    <property type="project" value="TreeGrafter"/>
</dbReference>
<dbReference type="GO" id="GO:0004107">
    <property type="term" value="F:chorismate synthase activity"/>
    <property type="evidence" value="ECO:0007669"/>
    <property type="project" value="UniProtKB-UniRule"/>
</dbReference>
<dbReference type="GO" id="GO:0010181">
    <property type="term" value="F:FMN binding"/>
    <property type="evidence" value="ECO:0007669"/>
    <property type="project" value="TreeGrafter"/>
</dbReference>
<dbReference type="GO" id="GO:0008652">
    <property type="term" value="P:amino acid biosynthetic process"/>
    <property type="evidence" value="ECO:0007669"/>
    <property type="project" value="UniProtKB-KW"/>
</dbReference>
<dbReference type="GO" id="GO:0009073">
    <property type="term" value="P:aromatic amino acid family biosynthetic process"/>
    <property type="evidence" value="ECO:0007669"/>
    <property type="project" value="UniProtKB-KW"/>
</dbReference>
<dbReference type="GO" id="GO:0009423">
    <property type="term" value="P:chorismate biosynthetic process"/>
    <property type="evidence" value="ECO:0007669"/>
    <property type="project" value="UniProtKB-UniRule"/>
</dbReference>
<dbReference type="CDD" id="cd07304">
    <property type="entry name" value="Chorismate_synthase"/>
    <property type="match status" value="1"/>
</dbReference>
<dbReference type="FunFam" id="3.60.150.10:FF:000002">
    <property type="entry name" value="Chorismate synthase"/>
    <property type="match status" value="1"/>
</dbReference>
<dbReference type="Gene3D" id="3.60.150.10">
    <property type="entry name" value="Chorismate synthase AroC"/>
    <property type="match status" value="1"/>
</dbReference>
<dbReference type="HAMAP" id="MF_00300">
    <property type="entry name" value="Chorismate_synth"/>
    <property type="match status" value="1"/>
</dbReference>
<dbReference type="InterPro" id="IPR000453">
    <property type="entry name" value="Chorismate_synth"/>
</dbReference>
<dbReference type="InterPro" id="IPR035904">
    <property type="entry name" value="Chorismate_synth_AroC_sf"/>
</dbReference>
<dbReference type="InterPro" id="IPR020541">
    <property type="entry name" value="Chorismate_synthase_CS"/>
</dbReference>
<dbReference type="NCBIfam" id="TIGR00033">
    <property type="entry name" value="aroC"/>
    <property type="match status" value="1"/>
</dbReference>
<dbReference type="NCBIfam" id="NF003793">
    <property type="entry name" value="PRK05382.1"/>
    <property type="match status" value="1"/>
</dbReference>
<dbReference type="PANTHER" id="PTHR21085">
    <property type="entry name" value="CHORISMATE SYNTHASE"/>
    <property type="match status" value="1"/>
</dbReference>
<dbReference type="PANTHER" id="PTHR21085:SF0">
    <property type="entry name" value="CHORISMATE SYNTHASE"/>
    <property type="match status" value="1"/>
</dbReference>
<dbReference type="Pfam" id="PF01264">
    <property type="entry name" value="Chorismate_synt"/>
    <property type="match status" value="1"/>
</dbReference>
<dbReference type="PIRSF" id="PIRSF001456">
    <property type="entry name" value="Chorismate_synth"/>
    <property type="match status" value="1"/>
</dbReference>
<dbReference type="SUPFAM" id="SSF103263">
    <property type="entry name" value="Chorismate synthase, AroC"/>
    <property type="match status" value="1"/>
</dbReference>
<dbReference type="PROSITE" id="PS00787">
    <property type="entry name" value="CHORISMATE_SYNTHASE_1"/>
    <property type="match status" value="1"/>
</dbReference>
<dbReference type="PROSITE" id="PS00788">
    <property type="entry name" value="CHORISMATE_SYNTHASE_2"/>
    <property type="match status" value="1"/>
</dbReference>
<dbReference type="PROSITE" id="PS00789">
    <property type="entry name" value="CHORISMATE_SYNTHASE_3"/>
    <property type="match status" value="1"/>
</dbReference>
<feature type="chain" id="PRO_1000079012" description="Chorismate synthase">
    <location>
        <begin position="1"/>
        <end position="388"/>
    </location>
</feature>
<feature type="binding site" evidence="1">
    <location>
        <position position="39"/>
    </location>
    <ligand>
        <name>NADP(+)</name>
        <dbReference type="ChEBI" id="CHEBI:58349"/>
    </ligand>
</feature>
<feature type="binding site" evidence="1">
    <location>
        <position position="45"/>
    </location>
    <ligand>
        <name>NADP(+)</name>
        <dbReference type="ChEBI" id="CHEBI:58349"/>
    </ligand>
</feature>
<feature type="binding site" evidence="1">
    <location>
        <begin position="132"/>
        <end position="134"/>
    </location>
    <ligand>
        <name>FMN</name>
        <dbReference type="ChEBI" id="CHEBI:58210"/>
    </ligand>
</feature>
<feature type="binding site" evidence="1">
    <location>
        <begin position="251"/>
        <end position="252"/>
    </location>
    <ligand>
        <name>FMN</name>
        <dbReference type="ChEBI" id="CHEBI:58210"/>
    </ligand>
</feature>
<feature type="binding site" evidence="1">
    <location>
        <position position="296"/>
    </location>
    <ligand>
        <name>FMN</name>
        <dbReference type="ChEBI" id="CHEBI:58210"/>
    </ligand>
</feature>
<feature type="binding site" evidence="1">
    <location>
        <begin position="311"/>
        <end position="315"/>
    </location>
    <ligand>
        <name>FMN</name>
        <dbReference type="ChEBI" id="CHEBI:58210"/>
    </ligand>
</feature>
<feature type="binding site" evidence="1">
    <location>
        <position position="337"/>
    </location>
    <ligand>
        <name>FMN</name>
        <dbReference type="ChEBI" id="CHEBI:58210"/>
    </ligand>
</feature>
<organism>
    <name type="scientific">Staphylococcus aureus (strain JH9)</name>
    <dbReference type="NCBI Taxonomy" id="359786"/>
    <lineage>
        <taxon>Bacteria</taxon>
        <taxon>Bacillati</taxon>
        <taxon>Bacillota</taxon>
        <taxon>Bacilli</taxon>
        <taxon>Bacillales</taxon>
        <taxon>Staphylococcaceae</taxon>
        <taxon>Staphylococcus</taxon>
    </lineage>
</organism>
<evidence type="ECO:0000255" key="1">
    <source>
        <dbReference type="HAMAP-Rule" id="MF_00300"/>
    </source>
</evidence>
<sequence length="388" mass="42991">MRYLTSGESHGPQLTVIVEGIPANLEIKVEDINKEMFKRQGGYGRGRRMQIEKDTVEIVSGVRNGYTLGSPITMVVTNDDFTHWRKIMGAAPISEEERENMKRTITKPRPGHADLVGGMKYNHRDLRNVLERSSARETAARVAVGALCKVLLQQLDIDIYSRVVEIGGIKDKDFYDSETFKANLDRNDVRVIDDSIAQAMRDKIDEAKNEGDSIGGVVQVVVENMPVGVGSYVHYDRKLDGKIAQGVVSINAFKGVSFGEGFKAAEKPGSEIQDEILYNSEIGYYRGSNHLGGLEGGMSNGMPIIVNGVMKPIPTLYKPLNSVDINTKEDFKATIERSDSCAVPAASIVCEHVVAFEIAKALLEEFQSNHIEQLQQQIADRRQLNVEF</sequence>
<gene>
    <name evidence="1" type="primary">aroC</name>
    <name type="ordered locus">SaurJH9_1525</name>
</gene>
<protein>
    <recommendedName>
        <fullName evidence="1">Chorismate synthase</fullName>
        <shortName evidence="1">CS</shortName>
        <ecNumber evidence="1">4.2.3.5</ecNumber>
    </recommendedName>
    <alternativeName>
        <fullName evidence="1">5-enolpyruvylshikimate-3-phosphate phospholyase</fullName>
    </alternativeName>
</protein>
<comment type="function">
    <text evidence="1">Catalyzes the anti-1,4-elimination of the C-3 phosphate and the C-6 proR hydrogen from 5-enolpyruvylshikimate-3-phosphate (EPSP) to yield chorismate, which is the branch point compound that serves as the starting substrate for the three terminal pathways of aromatic amino acid biosynthesis. This reaction introduces a second double bond into the aromatic ring system.</text>
</comment>
<comment type="catalytic activity">
    <reaction evidence="1">
        <text>5-O-(1-carboxyvinyl)-3-phosphoshikimate = chorismate + phosphate</text>
        <dbReference type="Rhea" id="RHEA:21020"/>
        <dbReference type="ChEBI" id="CHEBI:29748"/>
        <dbReference type="ChEBI" id="CHEBI:43474"/>
        <dbReference type="ChEBI" id="CHEBI:57701"/>
        <dbReference type="EC" id="4.2.3.5"/>
    </reaction>
</comment>
<comment type="cofactor">
    <cofactor evidence="1">
        <name>FMNH2</name>
        <dbReference type="ChEBI" id="CHEBI:57618"/>
    </cofactor>
    <text evidence="1">Reduced FMN (FMNH(2)).</text>
</comment>
<comment type="pathway">
    <text evidence="1">Metabolic intermediate biosynthesis; chorismate biosynthesis; chorismate from D-erythrose 4-phosphate and phosphoenolpyruvate: step 7/7.</text>
</comment>
<comment type="subunit">
    <text evidence="1">Homotetramer.</text>
</comment>
<comment type="similarity">
    <text evidence="1">Belongs to the chorismate synthase family.</text>
</comment>
<proteinExistence type="inferred from homology"/>
<reference key="1">
    <citation type="submission" date="2007-05" db="EMBL/GenBank/DDBJ databases">
        <title>Complete sequence of chromosome of Staphylococcus aureus subsp. aureus JH9.</title>
        <authorList>
            <consortium name="US DOE Joint Genome Institute"/>
            <person name="Copeland A."/>
            <person name="Lucas S."/>
            <person name="Lapidus A."/>
            <person name="Barry K."/>
            <person name="Detter J.C."/>
            <person name="Glavina del Rio T."/>
            <person name="Hammon N."/>
            <person name="Israni S."/>
            <person name="Pitluck S."/>
            <person name="Chain P."/>
            <person name="Malfatti S."/>
            <person name="Shin M."/>
            <person name="Vergez L."/>
            <person name="Schmutz J."/>
            <person name="Larimer F."/>
            <person name="Land M."/>
            <person name="Hauser L."/>
            <person name="Kyrpides N."/>
            <person name="Kim E."/>
            <person name="Tomasz A."/>
            <person name="Richardson P."/>
        </authorList>
    </citation>
    <scope>NUCLEOTIDE SEQUENCE [LARGE SCALE GENOMIC DNA]</scope>
    <source>
        <strain>JH9</strain>
    </source>
</reference>
<keyword id="KW-0028">Amino-acid biosynthesis</keyword>
<keyword id="KW-0057">Aromatic amino acid biosynthesis</keyword>
<keyword id="KW-0274">FAD</keyword>
<keyword id="KW-0285">Flavoprotein</keyword>
<keyword id="KW-0288">FMN</keyword>
<keyword id="KW-0456">Lyase</keyword>
<keyword id="KW-0521">NADP</keyword>
<accession>A5ISZ6</accession>